<evidence type="ECO:0000250" key="1"/>
<evidence type="ECO:0000305" key="2"/>
<name>PROF_PRUAV</name>
<reference key="1">
    <citation type="journal article" date="2001" name="J. Chromatogr. B">
        <title>Cross-reactivity within the profilin panallergen family investigated by comparison of recombinant profilins from pear (Pyr c 4), cherry (Pru av 4) and celery (Api g 4) with birch pollen profilin Bet v 2.</title>
        <authorList>
            <person name="Scheurer S."/>
            <person name="Wangorsch A."/>
            <person name="Nerkamp J."/>
            <person name="Skov P.S."/>
            <person name="Ballmer-Weber B."/>
            <person name="Wuthrich B."/>
            <person name="Haustein D."/>
            <person name="Vieths S."/>
        </authorList>
    </citation>
    <scope>NUCLEOTIDE SEQUENCE [MRNA]</scope>
</reference>
<accession>Q9XF39</accession>
<feature type="initiator methionine" description="Removed" evidence="1">
    <location>
        <position position="1"/>
    </location>
</feature>
<feature type="chain" id="PRO_0000199667" description="Profilin">
    <location>
        <begin position="2"/>
        <end position="131"/>
    </location>
</feature>
<organism>
    <name type="scientific">Prunus avium</name>
    <name type="common">Cherry</name>
    <name type="synonym">Cerasus avium</name>
    <dbReference type="NCBI Taxonomy" id="42229"/>
    <lineage>
        <taxon>Eukaryota</taxon>
        <taxon>Viridiplantae</taxon>
        <taxon>Streptophyta</taxon>
        <taxon>Embryophyta</taxon>
        <taxon>Tracheophyta</taxon>
        <taxon>Spermatophyta</taxon>
        <taxon>Magnoliopsida</taxon>
        <taxon>eudicotyledons</taxon>
        <taxon>Gunneridae</taxon>
        <taxon>Pentapetalae</taxon>
        <taxon>rosids</taxon>
        <taxon>fabids</taxon>
        <taxon>Rosales</taxon>
        <taxon>Rosaceae</taxon>
        <taxon>Amygdaloideae</taxon>
        <taxon>Amygdaleae</taxon>
        <taxon>Prunus</taxon>
    </lineage>
</organism>
<comment type="function">
    <text evidence="1">Binds to actin and affects the structure of the cytoskeleton. At high concentrations, profilin prevents the polymerization of actin, whereas it enhances it at low concentrations. By binding to PIP2, it inhibits the formation of IP3 and DG (By similarity).</text>
</comment>
<comment type="subunit">
    <text>Occurs in many kinds of cells as a complex with monomeric actin in a 1:1 ratio.</text>
</comment>
<comment type="subcellular location">
    <subcellularLocation>
        <location evidence="1">Cytoplasm</location>
        <location evidence="1">Cytoskeleton</location>
    </subcellularLocation>
</comment>
<comment type="allergen">
    <text>Causes an allergic reaction in human. Food allergen.</text>
</comment>
<comment type="similarity">
    <text evidence="2">Belongs to the profilin family.</text>
</comment>
<protein>
    <recommendedName>
        <fullName>Profilin</fullName>
    </recommendedName>
    <alternativeName>
        <fullName>Allergen Pru a 3</fullName>
    </alternativeName>
    <allergenName>Pru av 4</allergenName>
</protein>
<dbReference type="EMBL" id="AF129425">
    <property type="protein sequence ID" value="AAD29411.1"/>
    <property type="molecule type" value="mRNA"/>
</dbReference>
<dbReference type="SMR" id="Q9XF39"/>
<dbReference type="Allergome" id="3450">
    <property type="allergen name" value="Pru av 4.0101"/>
</dbReference>
<dbReference type="Allergome" id="600">
    <property type="allergen name" value="Pru av 4"/>
</dbReference>
<dbReference type="Proteomes" id="UP000515124">
    <property type="component" value="Unplaced"/>
</dbReference>
<dbReference type="GO" id="GO:0005938">
    <property type="term" value="C:cell cortex"/>
    <property type="evidence" value="ECO:0007669"/>
    <property type="project" value="TreeGrafter"/>
</dbReference>
<dbReference type="GO" id="GO:0005856">
    <property type="term" value="C:cytoskeleton"/>
    <property type="evidence" value="ECO:0007669"/>
    <property type="project" value="UniProtKB-SubCell"/>
</dbReference>
<dbReference type="GO" id="GO:0003785">
    <property type="term" value="F:actin monomer binding"/>
    <property type="evidence" value="ECO:0007669"/>
    <property type="project" value="TreeGrafter"/>
</dbReference>
<dbReference type="CDD" id="cd00148">
    <property type="entry name" value="PROF"/>
    <property type="match status" value="1"/>
</dbReference>
<dbReference type="FunFam" id="3.30.450.30:FF:000001">
    <property type="entry name" value="Profilin"/>
    <property type="match status" value="1"/>
</dbReference>
<dbReference type="Gene3D" id="3.30.450.30">
    <property type="entry name" value="Dynein light chain 2a, cytoplasmic"/>
    <property type="match status" value="1"/>
</dbReference>
<dbReference type="InterPro" id="IPR048278">
    <property type="entry name" value="PFN"/>
</dbReference>
<dbReference type="InterPro" id="IPR005455">
    <property type="entry name" value="PFN_euk"/>
</dbReference>
<dbReference type="InterPro" id="IPR036140">
    <property type="entry name" value="PFN_sf"/>
</dbReference>
<dbReference type="InterPro" id="IPR027310">
    <property type="entry name" value="Profilin_CS"/>
</dbReference>
<dbReference type="PANTHER" id="PTHR11604">
    <property type="entry name" value="PROFILIN"/>
    <property type="match status" value="1"/>
</dbReference>
<dbReference type="PANTHER" id="PTHR11604:SF59">
    <property type="entry name" value="PROFILIN"/>
    <property type="match status" value="1"/>
</dbReference>
<dbReference type="Pfam" id="PF00235">
    <property type="entry name" value="Profilin"/>
    <property type="match status" value="1"/>
</dbReference>
<dbReference type="PRINTS" id="PR00392">
    <property type="entry name" value="PROFILIN"/>
</dbReference>
<dbReference type="PRINTS" id="PR01640">
    <property type="entry name" value="PROFILINPLNT"/>
</dbReference>
<dbReference type="SMART" id="SM00392">
    <property type="entry name" value="PROF"/>
    <property type="match status" value="1"/>
</dbReference>
<dbReference type="SUPFAM" id="SSF55770">
    <property type="entry name" value="Profilin (actin-binding protein)"/>
    <property type="match status" value="1"/>
</dbReference>
<dbReference type="PROSITE" id="PS00414">
    <property type="entry name" value="PROFILIN"/>
    <property type="match status" value="1"/>
</dbReference>
<sequence>MSWQAYVDDHLMCDIDGNRLTAAAILGQDGSVWSQSATFPAFKPEEIAAILKDLDQPGTLAPTGLFLGGTKYMVIQGEAGAVIRGKKGSGGITVKKTNQALIIGIYDEPLTPGQCNMIVERLGDYLIEQGL</sequence>
<keyword id="KW-0009">Actin-binding</keyword>
<keyword id="KW-0020">Allergen</keyword>
<keyword id="KW-0963">Cytoplasm</keyword>
<keyword id="KW-0206">Cytoskeleton</keyword>
<keyword id="KW-1185">Reference proteome</keyword>
<proteinExistence type="evidence at protein level"/>